<sequence length="510" mass="58458">MSKKSVKARVIKASPPTESTKQIYEDEFADSYDSNILPPPYNLKELKMIAEYSTILQQCVDAYRTNIVGFGFDFEYSFDVNSPDVTNEEKTEAESEWTKLEEFVKYLHFDESAETLLGFVIEDREKTGNGFIEVIRNGENKPAGIEYMDVQNVRVCKLSEPIEVDFTYFEQGQMKSIKREKRFRKYVQMIDGRMVYFKEYGDPRTLNLETGQYDEQTPLEKRANEVVHFKIGSGIYGKPRWIGHIVNLYGARKAEELNFMYFKQGRHIPAAITIENGMLSEDSYTQLQDYMNGLEGVENAHKFLLLEAEGIAKGKNIHGDEEIAPVKVDIKSLAEILQEDALFLEYDQKNRDKIRSAFRLPPLYTGEAQDYNRATADTARKITEEQVFQPERKLITGKLNALFLNDLEIHKVRLQLKGPDFRDPLEIAKVLTPFITAGAVSPNDLRDLAGRVLGKTLEEWPEEEYNRPLGKTNESSVSDPLAALFKSKNGTPNMIGLLKDMRDVLEDLKR</sequence>
<dbReference type="EMBL" id="D32216">
    <property type="protein sequence ID" value="BAA06934.1"/>
    <property type="molecule type" value="Genomic_DNA"/>
</dbReference>
<dbReference type="EMBL" id="D84432">
    <property type="protein sequence ID" value="BAA12396.1"/>
    <property type="molecule type" value="Genomic_DNA"/>
</dbReference>
<dbReference type="EMBL" id="AL009126">
    <property type="protein sequence ID" value="CAB14559.1"/>
    <property type="molecule type" value="Genomic_DNA"/>
</dbReference>
<dbReference type="PIR" id="D69946">
    <property type="entry name" value="D69946"/>
</dbReference>
<dbReference type="RefSeq" id="NP_390495.1">
    <property type="nucleotide sequence ID" value="NC_000964.3"/>
</dbReference>
<dbReference type="RefSeq" id="WP_004398894.1">
    <property type="nucleotide sequence ID" value="NZ_OZ025638.1"/>
</dbReference>
<dbReference type="FunCoup" id="P45917">
    <property type="interactions" value="53"/>
</dbReference>
<dbReference type="STRING" id="224308.BSU26180"/>
<dbReference type="PaxDb" id="224308-BSU26180"/>
<dbReference type="EnsemblBacteria" id="CAB14559">
    <property type="protein sequence ID" value="CAB14559"/>
    <property type="gene ID" value="BSU_26180"/>
</dbReference>
<dbReference type="GeneID" id="937707"/>
<dbReference type="KEGG" id="bsu:BSU26180"/>
<dbReference type="PATRIC" id="fig|224308.179.peg.2844"/>
<dbReference type="eggNOG" id="COG5518">
    <property type="taxonomic scope" value="Bacteria"/>
</dbReference>
<dbReference type="InParanoid" id="P45917"/>
<dbReference type="OrthoDB" id="2756373at2"/>
<dbReference type="BioCyc" id="BSUB:BSU26180-MONOMER"/>
<dbReference type="Proteomes" id="UP000001570">
    <property type="component" value="Chromosome"/>
</dbReference>
<dbReference type="InterPro" id="IPR016753">
    <property type="entry name" value="PBSX_Firmicutes"/>
</dbReference>
<dbReference type="InterPro" id="IPR006944">
    <property type="entry name" value="Phage/GTA_portal"/>
</dbReference>
<dbReference type="InterPro" id="IPR006430">
    <property type="entry name" value="Phage_portal_PBSX"/>
</dbReference>
<dbReference type="NCBIfam" id="TIGR01540">
    <property type="entry name" value="portal_PBSX"/>
    <property type="match status" value="1"/>
</dbReference>
<dbReference type="Pfam" id="PF04860">
    <property type="entry name" value="Phage_portal"/>
    <property type="match status" value="1"/>
</dbReference>
<dbReference type="PIRSF" id="PIRSF019260">
    <property type="entry name" value="PBSX_XkdE_prd"/>
    <property type="match status" value="1"/>
</dbReference>
<gene>
    <name type="primary">yqbA</name>
    <name type="ordered locus">BSU26180</name>
</gene>
<evidence type="ECO:0000305" key="1"/>
<protein>
    <recommendedName>
        <fullName>Uncharacterized protein YqbA</fullName>
    </recommendedName>
</protein>
<accession>P45917</accession>
<comment type="similarity">
    <text evidence="1">Belongs to the phage portal family. PBSX subfamily.</text>
</comment>
<reference key="1">
    <citation type="journal article" date="1995" name="Microbiology">
        <title>Complete nucleotide sequence of a skin element excised by DNA rearrangement during sporulation in Bacillus subtilis.</title>
        <authorList>
            <person name="Takemaru K."/>
            <person name="Mizuno M."/>
            <person name="Sato T."/>
            <person name="Takeuchi M."/>
            <person name="Kobayashi Y."/>
        </authorList>
    </citation>
    <scope>NUCLEOTIDE SEQUENCE [GENOMIC DNA]</scope>
    <source>
        <strain>168 / JH642</strain>
    </source>
</reference>
<reference key="2">
    <citation type="journal article" date="1996" name="Microbiology">
        <title>Systematic sequencing of the 283 kb 210 degrees-232 degrees region of the Bacillus subtilis genome containing the skin element and many sporulation genes.</title>
        <authorList>
            <person name="Mizuno M."/>
            <person name="Masuda S."/>
            <person name="Takemaru K."/>
            <person name="Hosono S."/>
            <person name="Sato T."/>
            <person name="Takeuchi M."/>
            <person name="Kobayashi Y."/>
        </authorList>
    </citation>
    <scope>NUCLEOTIDE SEQUENCE [GENOMIC DNA]</scope>
    <source>
        <strain>168 / JH642</strain>
    </source>
</reference>
<reference key="3">
    <citation type="journal article" date="1997" name="Nature">
        <title>The complete genome sequence of the Gram-positive bacterium Bacillus subtilis.</title>
        <authorList>
            <person name="Kunst F."/>
            <person name="Ogasawara N."/>
            <person name="Moszer I."/>
            <person name="Albertini A.M."/>
            <person name="Alloni G."/>
            <person name="Azevedo V."/>
            <person name="Bertero M.G."/>
            <person name="Bessieres P."/>
            <person name="Bolotin A."/>
            <person name="Borchert S."/>
            <person name="Borriss R."/>
            <person name="Boursier L."/>
            <person name="Brans A."/>
            <person name="Braun M."/>
            <person name="Brignell S.C."/>
            <person name="Bron S."/>
            <person name="Brouillet S."/>
            <person name="Bruschi C.V."/>
            <person name="Caldwell B."/>
            <person name="Capuano V."/>
            <person name="Carter N.M."/>
            <person name="Choi S.-K."/>
            <person name="Codani J.-J."/>
            <person name="Connerton I.F."/>
            <person name="Cummings N.J."/>
            <person name="Daniel R.A."/>
            <person name="Denizot F."/>
            <person name="Devine K.M."/>
            <person name="Duesterhoeft A."/>
            <person name="Ehrlich S.D."/>
            <person name="Emmerson P.T."/>
            <person name="Entian K.-D."/>
            <person name="Errington J."/>
            <person name="Fabret C."/>
            <person name="Ferrari E."/>
            <person name="Foulger D."/>
            <person name="Fritz C."/>
            <person name="Fujita M."/>
            <person name="Fujita Y."/>
            <person name="Fuma S."/>
            <person name="Galizzi A."/>
            <person name="Galleron N."/>
            <person name="Ghim S.-Y."/>
            <person name="Glaser P."/>
            <person name="Goffeau A."/>
            <person name="Golightly E.J."/>
            <person name="Grandi G."/>
            <person name="Guiseppi G."/>
            <person name="Guy B.J."/>
            <person name="Haga K."/>
            <person name="Haiech J."/>
            <person name="Harwood C.R."/>
            <person name="Henaut A."/>
            <person name="Hilbert H."/>
            <person name="Holsappel S."/>
            <person name="Hosono S."/>
            <person name="Hullo M.-F."/>
            <person name="Itaya M."/>
            <person name="Jones L.-M."/>
            <person name="Joris B."/>
            <person name="Karamata D."/>
            <person name="Kasahara Y."/>
            <person name="Klaerr-Blanchard M."/>
            <person name="Klein C."/>
            <person name="Kobayashi Y."/>
            <person name="Koetter P."/>
            <person name="Koningstein G."/>
            <person name="Krogh S."/>
            <person name="Kumano M."/>
            <person name="Kurita K."/>
            <person name="Lapidus A."/>
            <person name="Lardinois S."/>
            <person name="Lauber J."/>
            <person name="Lazarevic V."/>
            <person name="Lee S.-M."/>
            <person name="Levine A."/>
            <person name="Liu H."/>
            <person name="Masuda S."/>
            <person name="Mauel C."/>
            <person name="Medigue C."/>
            <person name="Medina N."/>
            <person name="Mellado R.P."/>
            <person name="Mizuno M."/>
            <person name="Moestl D."/>
            <person name="Nakai S."/>
            <person name="Noback M."/>
            <person name="Noone D."/>
            <person name="O'Reilly M."/>
            <person name="Ogawa K."/>
            <person name="Ogiwara A."/>
            <person name="Oudega B."/>
            <person name="Park S.-H."/>
            <person name="Parro V."/>
            <person name="Pohl T.M."/>
            <person name="Portetelle D."/>
            <person name="Porwollik S."/>
            <person name="Prescott A.M."/>
            <person name="Presecan E."/>
            <person name="Pujic P."/>
            <person name="Purnelle B."/>
            <person name="Rapoport G."/>
            <person name="Rey M."/>
            <person name="Reynolds S."/>
            <person name="Rieger M."/>
            <person name="Rivolta C."/>
            <person name="Rocha E."/>
            <person name="Roche B."/>
            <person name="Rose M."/>
            <person name="Sadaie Y."/>
            <person name="Sato T."/>
            <person name="Scanlan E."/>
            <person name="Schleich S."/>
            <person name="Schroeter R."/>
            <person name="Scoffone F."/>
            <person name="Sekiguchi J."/>
            <person name="Sekowska A."/>
            <person name="Seror S.J."/>
            <person name="Serror P."/>
            <person name="Shin B.-S."/>
            <person name="Soldo B."/>
            <person name="Sorokin A."/>
            <person name="Tacconi E."/>
            <person name="Takagi T."/>
            <person name="Takahashi H."/>
            <person name="Takemaru K."/>
            <person name="Takeuchi M."/>
            <person name="Tamakoshi A."/>
            <person name="Tanaka T."/>
            <person name="Terpstra P."/>
            <person name="Tognoni A."/>
            <person name="Tosato V."/>
            <person name="Uchiyama S."/>
            <person name="Vandenbol M."/>
            <person name="Vannier F."/>
            <person name="Vassarotti A."/>
            <person name="Viari A."/>
            <person name="Wambutt R."/>
            <person name="Wedler E."/>
            <person name="Wedler H."/>
            <person name="Weitzenegger T."/>
            <person name="Winters P."/>
            <person name="Wipat A."/>
            <person name="Yamamoto H."/>
            <person name="Yamane K."/>
            <person name="Yasumoto K."/>
            <person name="Yata K."/>
            <person name="Yoshida K."/>
            <person name="Yoshikawa H.-F."/>
            <person name="Zumstein E."/>
            <person name="Yoshikawa H."/>
            <person name="Danchin A."/>
        </authorList>
    </citation>
    <scope>NUCLEOTIDE SEQUENCE [LARGE SCALE GENOMIC DNA]</scope>
    <source>
        <strain>168</strain>
    </source>
</reference>
<reference key="4">
    <citation type="journal article" date="1995" name="Gene">
        <title>Analysis of a Bacillus subtilis genome fragment using a co-operative computer system prototype.</title>
        <authorList>
            <person name="Medigue C."/>
            <person name="Moszer I."/>
            <person name="Viari A."/>
            <person name="Danchin A."/>
        </authorList>
    </citation>
    <scope>IDENTIFICATION</scope>
</reference>
<keyword id="KW-1185">Reference proteome</keyword>
<organism>
    <name type="scientific">Bacillus subtilis (strain 168)</name>
    <dbReference type="NCBI Taxonomy" id="224308"/>
    <lineage>
        <taxon>Bacteria</taxon>
        <taxon>Bacillati</taxon>
        <taxon>Bacillota</taxon>
        <taxon>Bacilli</taxon>
        <taxon>Bacillales</taxon>
        <taxon>Bacillaceae</taxon>
        <taxon>Bacillus</taxon>
    </lineage>
</organism>
<name>YQBA_BACSU</name>
<proteinExistence type="inferred from homology"/>
<feature type="chain" id="PRO_0000049752" description="Uncharacterized protein YqbA">
    <location>
        <begin position="1"/>
        <end position="510"/>
    </location>
</feature>